<gene>
    <name type="primary">TMK</name>
    <name type="ordered locus">MVA161R</name>
    <name type="ordered locus">ACAM3000_MVA_161</name>
</gene>
<comment type="catalytic activity">
    <reaction>
        <text>dTMP + ATP = dTDP + ADP</text>
        <dbReference type="Rhea" id="RHEA:13517"/>
        <dbReference type="ChEBI" id="CHEBI:30616"/>
        <dbReference type="ChEBI" id="CHEBI:58369"/>
        <dbReference type="ChEBI" id="CHEBI:63528"/>
        <dbReference type="ChEBI" id="CHEBI:456216"/>
        <dbReference type="EC" id="2.7.4.9"/>
    </reaction>
</comment>
<comment type="pathway">
    <text>Pyrimidine metabolism; dTTP biosynthesis.</text>
</comment>
<comment type="similarity">
    <text evidence="1">Belongs to the thymidylate kinase family.</text>
</comment>
<sequence length="204" mass="23219">MSRGALIVFEGLDKSGKTTQCMNIMESIPANTIKYLNFPQRSTVTGKMIDDYLTRKKTYNDHIVNLLFCANRWEFASFIQEQLEQGITLIVDRYAFSGVAYAAAKGASMTLSKSYESGLPKPDLVIFLESGSKEINRNVGEEIYEDVTFQQKVLQEYKKMIEEGDIHWQIISSEFEEDVKKELIKNIVIEAIHTVTGPVGQLWM</sequence>
<reference key="1">
    <citation type="journal article" date="1998" name="Virology">
        <title>The complete genomic sequence of the modified vaccinia Ankara strain: comparison with other orthopoxviruses.</title>
        <authorList>
            <person name="Antoine G."/>
            <person name="Scheiflinger F."/>
            <person name="Dorner F."/>
            <person name="Falkner F.G."/>
        </authorList>
    </citation>
    <scope>NUCLEOTIDE SEQUENCE [LARGE SCALE GENOMIC DNA]</scope>
</reference>
<reference key="2">
    <citation type="submission" date="2004-04" db="EMBL/GenBank/DDBJ databases">
        <authorList>
            <person name="Esposito J.J."/>
            <person name="Frace M."/>
            <person name="Sammons S.A."/>
            <person name="Olsen-Rasmussen M.S."/>
            <person name="Osborne J."/>
            <person name="Khristova M."/>
            <person name="Wohlhueter R.M."/>
        </authorList>
    </citation>
    <scope>NUCLEOTIDE SEQUENCE [LARGE SCALE GENOMIC DNA]</scope>
    <source>
        <strain>Isolate Acambis 3000</strain>
    </source>
</reference>
<dbReference type="EC" id="2.7.4.9"/>
<dbReference type="EMBL" id="U94848">
    <property type="protein sequence ID" value="AAB96539.1"/>
    <property type="molecule type" value="Genomic_DNA"/>
</dbReference>
<dbReference type="EMBL" id="AY603355">
    <property type="protein sequence ID" value="AAT10559.1"/>
    <property type="molecule type" value="Genomic_DNA"/>
</dbReference>
<dbReference type="SMR" id="Q76RA8"/>
<dbReference type="UniPathway" id="UPA00575"/>
<dbReference type="Proteomes" id="UP000159908">
    <property type="component" value="Segment"/>
</dbReference>
<dbReference type="Proteomes" id="UP000172909">
    <property type="component" value="Segment"/>
</dbReference>
<dbReference type="GO" id="GO:0005524">
    <property type="term" value="F:ATP binding"/>
    <property type="evidence" value="ECO:0007669"/>
    <property type="project" value="UniProtKB-KW"/>
</dbReference>
<dbReference type="GO" id="GO:0004798">
    <property type="term" value="F:dTMP kinase activity"/>
    <property type="evidence" value="ECO:0007669"/>
    <property type="project" value="UniProtKB-EC"/>
</dbReference>
<dbReference type="GO" id="GO:0004550">
    <property type="term" value="F:nucleoside diphosphate kinase activity"/>
    <property type="evidence" value="ECO:0007669"/>
    <property type="project" value="TreeGrafter"/>
</dbReference>
<dbReference type="GO" id="GO:0006233">
    <property type="term" value="P:dTDP biosynthetic process"/>
    <property type="evidence" value="ECO:0007669"/>
    <property type="project" value="InterPro"/>
</dbReference>
<dbReference type="GO" id="GO:0006235">
    <property type="term" value="P:dTTP biosynthetic process"/>
    <property type="evidence" value="ECO:0007669"/>
    <property type="project" value="UniProtKB-UniPathway"/>
</dbReference>
<dbReference type="GO" id="GO:0006227">
    <property type="term" value="P:dUDP biosynthetic process"/>
    <property type="evidence" value="ECO:0007669"/>
    <property type="project" value="TreeGrafter"/>
</dbReference>
<dbReference type="Gene3D" id="3.40.50.300">
    <property type="entry name" value="P-loop containing nucleotide triphosphate hydrolases"/>
    <property type="match status" value="1"/>
</dbReference>
<dbReference type="InterPro" id="IPR027417">
    <property type="entry name" value="P-loop_NTPase"/>
</dbReference>
<dbReference type="InterPro" id="IPR039430">
    <property type="entry name" value="Thymidylate_kin-like_dom"/>
</dbReference>
<dbReference type="InterPro" id="IPR018095">
    <property type="entry name" value="Thymidylate_kin_CS"/>
</dbReference>
<dbReference type="InterPro" id="IPR018094">
    <property type="entry name" value="Thymidylate_kinase"/>
</dbReference>
<dbReference type="NCBIfam" id="TIGR00041">
    <property type="entry name" value="DTMP_kinase"/>
    <property type="match status" value="1"/>
</dbReference>
<dbReference type="PANTHER" id="PTHR10344">
    <property type="entry name" value="THYMIDYLATE KINASE"/>
    <property type="match status" value="1"/>
</dbReference>
<dbReference type="PANTHER" id="PTHR10344:SF1">
    <property type="entry name" value="THYMIDYLATE KINASE"/>
    <property type="match status" value="1"/>
</dbReference>
<dbReference type="Pfam" id="PF02223">
    <property type="entry name" value="Thymidylate_kin"/>
    <property type="match status" value="1"/>
</dbReference>
<dbReference type="SUPFAM" id="SSF52540">
    <property type="entry name" value="P-loop containing nucleoside triphosphate hydrolases"/>
    <property type="match status" value="1"/>
</dbReference>
<dbReference type="PROSITE" id="PS01331">
    <property type="entry name" value="THYMIDYLATE_KINASE"/>
    <property type="match status" value="1"/>
</dbReference>
<organism>
    <name type="scientific">Vaccinia virus (strain Ankara)</name>
    <name type="common">VACV</name>
    <dbReference type="NCBI Taxonomy" id="126794"/>
    <lineage>
        <taxon>Viruses</taxon>
        <taxon>Varidnaviria</taxon>
        <taxon>Bamfordvirae</taxon>
        <taxon>Nucleocytoviricota</taxon>
        <taxon>Pokkesviricetes</taxon>
        <taxon>Chitovirales</taxon>
        <taxon>Poxviridae</taxon>
        <taxon>Chordopoxvirinae</taxon>
        <taxon>Orthopoxvirus</taxon>
        <taxon>Vaccinia virus</taxon>
    </lineage>
</organism>
<organismHost>
    <name type="scientific">Homo sapiens</name>
    <name type="common">Human</name>
    <dbReference type="NCBI Taxonomy" id="9606"/>
</organismHost>
<feature type="chain" id="PRO_0000155216" description="Thymidylate kinase">
    <location>
        <begin position="1"/>
        <end position="204"/>
    </location>
</feature>
<feature type="binding site" evidence="1">
    <location>
        <begin position="11"/>
        <end position="18"/>
    </location>
    <ligand>
        <name>ATP</name>
        <dbReference type="ChEBI" id="CHEBI:30616"/>
    </ligand>
</feature>
<evidence type="ECO:0000305" key="1"/>
<accession>Q76RA8</accession>
<keyword id="KW-0067">ATP-binding</keyword>
<keyword id="KW-0418">Kinase</keyword>
<keyword id="KW-0545">Nucleotide biosynthesis</keyword>
<keyword id="KW-0547">Nucleotide-binding</keyword>
<keyword id="KW-0808">Transferase</keyword>
<protein>
    <recommendedName>
        <fullName>Thymidylate kinase</fullName>
        <ecNumber>2.7.4.9</ecNumber>
    </recommendedName>
    <alternativeName>
        <fullName>dTMP kinase</fullName>
    </alternativeName>
</protein>
<name>KTHY_VACCA</name>
<proteinExistence type="inferred from homology"/>